<evidence type="ECO:0000250" key="1"/>
<evidence type="ECO:0000255" key="2"/>
<evidence type="ECO:0000305" key="3"/>
<sequence>MMKCLFLLCLCLVPIVVFSSTFTSQNLIDLPSESPLPKPVLDTNGKELNPNSSYRIISIGRGALGGDVYLGKSPNSDAPCPDGVFRYNSDVGPSGTPVRFIPLSGGIFEDQLLNIQFNIPTVRLCVSYTIWKVGINAYLRTMLLETGGTIGQADSSYFKIVKSSILGYNLLYCPITRPILCPFCRDDDFCAKVGVVIQKGKRRLALVNENPLDVNFKEV</sequence>
<accession>Q03197</accession>
<feature type="signal peptide" evidence="1">
    <location>
        <begin position="1"/>
        <end position="23"/>
    </location>
</feature>
<feature type="propeptide" id="PRO_0000016922" evidence="1">
    <location>
        <begin position="24"/>
        <end position="32"/>
    </location>
</feature>
<feature type="chain" id="PRO_0000016923" description="Aspartic protease inhibitor 10">
    <location>
        <begin position="33"/>
        <end position="219"/>
    </location>
</feature>
<feature type="short sequence motif" description="Vacuolar targeting signal" evidence="1">
    <location>
        <begin position="26"/>
        <end position="31"/>
    </location>
</feature>
<feature type="site" description="Reactive bond for trypsin" evidence="1">
    <location>
        <begin position="99"/>
        <end position="100"/>
    </location>
</feature>
<feature type="site" description="Reactive bond for chymotrypsin" evidence="1">
    <location>
        <begin position="142"/>
        <end position="143"/>
    </location>
</feature>
<feature type="glycosylation site" description="N-linked (GlcNAc...) asparagine" evidence="2">
    <location>
        <position position="51"/>
    </location>
</feature>
<feature type="disulfide bond" evidence="1">
    <location>
        <begin position="80"/>
        <end position="125"/>
    </location>
</feature>
<feature type="disulfide bond" evidence="1">
    <location>
        <begin position="173"/>
        <end position="184"/>
    </location>
</feature>
<organism>
    <name type="scientific">Solanum tuberosum</name>
    <name type="common">Potato</name>
    <dbReference type="NCBI Taxonomy" id="4113"/>
    <lineage>
        <taxon>Eukaryota</taxon>
        <taxon>Viridiplantae</taxon>
        <taxon>Streptophyta</taxon>
        <taxon>Embryophyta</taxon>
        <taxon>Tracheophyta</taxon>
        <taxon>Spermatophyta</taxon>
        <taxon>Magnoliopsida</taxon>
        <taxon>eudicotyledons</taxon>
        <taxon>Gunneridae</taxon>
        <taxon>Pentapetalae</taxon>
        <taxon>asterids</taxon>
        <taxon>lamiids</taxon>
        <taxon>Solanales</taxon>
        <taxon>Solanaceae</taxon>
        <taxon>Solanoideae</taxon>
        <taxon>Solaneae</taxon>
        <taxon>Solanum</taxon>
    </lineage>
</organism>
<comment type="function">
    <text>Inhibitor of cathepsin D (aspartic protease) and trypsin (serine protease). Protects the plant by inhibiting proteases of invading organisms.</text>
</comment>
<comment type="tissue specificity">
    <text>In tubers and green buds of untreated plants. After abscisic acid treatment or mechanical wounding is mostly accumulated in leaves, to a lesser extent in stems, but not in roots.</text>
</comment>
<comment type="induction">
    <text>By abscisic acid (ABA), jasmonic acid (JA) and wounding.</text>
</comment>
<comment type="similarity">
    <text evidence="3">Belongs to the protease inhibitor I3 (leguminous Kunitz-type inhibitor) family.</text>
</comment>
<proteinExistence type="evidence at transcript level"/>
<keyword id="KW-0062">Aspartic protease inhibitor</keyword>
<keyword id="KW-1015">Disulfide bond</keyword>
<keyword id="KW-0325">Glycoprotein</keyword>
<keyword id="KW-0646">Protease inhibitor</keyword>
<keyword id="KW-1185">Reference proteome</keyword>
<keyword id="KW-0722">Serine protease inhibitor</keyword>
<keyword id="KW-0732">Signal</keyword>
<keyword id="KW-0346">Stress response</keyword>
<protein>
    <recommendedName>
        <fullName>Aspartic protease inhibitor 10</fullName>
    </recommendedName>
    <alternativeName>
        <fullName>Wound-induced aspartate proteinase CDI inhibitor</fullName>
    </alternativeName>
</protein>
<reference key="1">
    <citation type="journal article" date="1992" name="Plant Cell">
        <title>General roles of abscisic and jasmonic acids in gene activation as a result of mechanical wounding.</title>
        <authorList>
            <person name="Hildmann T."/>
            <person name="Ebneth M."/>
            <person name="Pena-Cortes H."/>
            <person name="Sanchez-Serrano J.J."/>
            <person name="Willmitzer L."/>
            <person name="Prat S."/>
        </authorList>
    </citation>
    <scope>NUCLEOTIDE SEQUENCE [MRNA]</scope>
    <source>
        <strain>cv. Desiree</strain>
        <tissue>Leaf</tissue>
    </source>
</reference>
<gene>
    <name type="primary">CDI</name>
</gene>
<dbReference type="EMBL" id="X67843">
    <property type="protein sequence ID" value="CAA48036.1"/>
    <property type="molecule type" value="mRNA"/>
</dbReference>
<dbReference type="PIR" id="JQ1692">
    <property type="entry name" value="JQ1692"/>
</dbReference>
<dbReference type="SMR" id="Q03197"/>
<dbReference type="MEROPS" id="I03.002"/>
<dbReference type="GlyCosmos" id="Q03197">
    <property type="glycosylation" value="1 site, No reported glycans"/>
</dbReference>
<dbReference type="InParanoid" id="Q03197"/>
<dbReference type="Proteomes" id="UP000011115">
    <property type="component" value="Unassembled WGS sequence"/>
</dbReference>
<dbReference type="ExpressionAtlas" id="Q03197">
    <property type="expression patterns" value="baseline and differential"/>
</dbReference>
<dbReference type="GO" id="GO:0019828">
    <property type="term" value="F:aspartic-type endopeptidase inhibitor activity"/>
    <property type="evidence" value="ECO:0007669"/>
    <property type="project" value="UniProtKB-KW"/>
</dbReference>
<dbReference type="GO" id="GO:0004867">
    <property type="term" value="F:serine-type endopeptidase inhibitor activity"/>
    <property type="evidence" value="ECO:0007669"/>
    <property type="project" value="UniProtKB-KW"/>
</dbReference>
<dbReference type="CDD" id="cd23372">
    <property type="entry name" value="beta-trefoil_STI_CPI-like"/>
    <property type="match status" value="1"/>
</dbReference>
<dbReference type="Gene3D" id="2.80.10.50">
    <property type="match status" value="1"/>
</dbReference>
<dbReference type="InterPro" id="IPR011065">
    <property type="entry name" value="Kunitz_inhibitor_STI-like_sf"/>
</dbReference>
<dbReference type="InterPro" id="IPR002160">
    <property type="entry name" value="Prot_inh_Kunz-lg"/>
</dbReference>
<dbReference type="PANTHER" id="PTHR33107">
    <property type="entry name" value="KUNITZ TRYPSIN INHIBITOR 2"/>
    <property type="match status" value="1"/>
</dbReference>
<dbReference type="PANTHER" id="PTHR33107:SF38">
    <property type="entry name" value="SERINE PROTEASE INHIBITOR 5"/>
    <property type="match status" value="1"/>
</dbReference>
<dbReference type="Pfam" id="PF00197">
    <property type="entry name" value="Kunitz_legume"/>
    <property type="match status" value="1"/>
</dbReference>
<dbReference type="PRINTS" id="PR00291">
    <property type="entry name" value="KUNITZINHBTR"/>
</dbReference>
<dbReference type="SMART" id="SM00452">
    <property type="entry name" value="STI"/>
    <property type="match status" value="1"/>
</dbReference>
<dbReference type="SUPFAM" id="SSF50386">
    <property type="entry name" value="STI-like"/>
    <property type="match status" value="1"/>
</dbReference>
<dbReference type="PROSITE" id="PS00283">
    <property type="entry name" value="SOYBEAN_KUNITZ"/>
    <property type="match status" value="1"/>
</dbReference>
<name>API10_SOLTU</name>